<reference key="1">
    <citation type="journal article" date="2006" name="Proc. Natl. Acad. Sci. U.S.A.">
        <title>The complete genome of Rhodococcus sp. RHA1 provides insights into a catabolic powerhouse.</title>
        <authorList>
            <person name="McLeod M.P."/>
            <person name="Warren R.L."/>
            <person name="Hsiao W.W.L."/>
            <person name="Araki N."/>
            <person name="Myhre M."/>
            <person name="Fernandes C."/>
            <person name="Miyazawa D."/>
            <person name="Wong W."/>
            <person name="Lillquist A.L."/>
            <person name="Wang D."/>
            <person name="Dosanjh M."/>
            <person name="Hara H."/>
            <person name="Petrescu A."/>
            <person name="Morin R.D."/>
            <person name="Yang G."/>
            <person name="Stott J.M."/>
            <person name="Schein J.E."/>
            <person name="Shin H."/>
            <person name="Smailus D."/>
            <person name="Siddiqui A.S."/>
            <person name="Marra M.A."/>
            <person name="Jones S.J.M."/>
            <person name="Holt R."/>
            <person name="Brinkman F.S.L."/>
            <person name="Miyauchi K."/>
            <person name="Fukuda M."/>
            <person name="Davies J.E."/>
            <person name="Mohn W.W."/>
            <person name="Eltis L.D."/>
        </authorList>
    </citation>
    <scope>NUCLEOTIDE SEQUENCE [LARGE SCALE GENOMIC DNA]</scope>
    <source>
        <strain>RHA1</strain>
    </source>
</reference>
<evidence type="ECO:0000255" key="1">
    <source>
        <dbReference type="HAMAP-Rule" id="MF_00630"/>
    </source>
</evidence>
<evidence type="ECO:0000256" key="2">
    <source>
        <dbReference type="SAM" id="MobiDB-lite"/>
    </source>
</evidence>
<dbReference type="EMBL" id="CP000431">
    <property type="protein sequence ID" value="ABG95473.1"/>
    <property type="molecule type" value="Genomic_DNA"/>
</dbReference>
<dbReference type="RefSeq" id="WP_009476748.1">
    <property type="nucleotide sequence ID" value="NC_008268.1"/>
</dbReference>
<dbReference type="SMR" id="Q0SAG3"/>
<dbReference type="KEGG" id="rha:RHA1_ro03670"/>
<dbReference type="eggNOG" id="COG5512">
    <property type="taxonomic scope" value="Bacteria"/>
</dbReference>
<dbReference type="HOGENOM" id="CLU_087206_0_1_11"/>
<dbReference type="OrthoDB" id="5516926at2"/>
<dbReference type="Proteomes" id="UP000008710">
    <property type="component" value="Chromosome"/>
</dbReference>
<dbReference type="HAMAP" id="MF_00630">
    <property type="entry name" value="UPF0232"/>
    <property type="match status" value="1"/>
</dbReference>
<dbReference type="InterPro" id="IPR007922">
    <property type="entry name" value="DciA-like"/>
</dbReference>
<dbReference type="InterPro" id="IPR023007">
    <property type="entry name" value="UPF0232_actinobac"/>
</dbReference>
<dbReference type="NCBIfam" id="NF002871">
    <property type="entry name" value="PRK03195.1"/>
    <property type="match status" value="1"/>
</dbReference>
<dbReference type="PANTHER" id="PTHR36456">
    <property type="entry name" value="UPF0232 PROTEIN SCO3875"/>
    <property type="match status" value="1"/>
</dbReference>
<dbReference type="PANTHER" id="PTHR36456:SF1">
    <property type="entry name" value="UPF0232 PROTEIN SCO3875"/>
    <property type="match status" value="1"/>
</dbReference>
<dbReference type="Pfam" id="PF05258">
    <property type="entry name" value="DciA"/>
    <property type="match status" value="1"/>
</dbReference>
<sequence length="188" mass="19904">MTDDLEPTAPAAAAPEPEVKGIDLARRALEEARAAAKASGKSVGQGRRSGTGVRALRARRRRGWSGPGPDDRDPQPFGALTNAIAKQRGWSPKVSEGTVLGRWVQVVGEDIAAHAEPTGLRDGILSVSAESTAWATQLRMMQSQILAKIAAAVGDGVVKSLRITGPTAPSWRKGERHIRGRGPRDTYG</sequence>
<proteinExistence type="inferred from homology"/>
<protein>
    <recommendedName>
        <fullName evidence="1">UPF0232 protein RHA1_ro03670</fullName>
    </recommendedName>
</protein>
<feature type="chain" id="PRO_1000147273" description="UPF0232 protein RHA1_ro03670">
    <location>
        <begin position="1"/>
        <end position="188"/>
    </location>
</feature>
<feature type="region of interest" description="Disordered" evidence="2">
    <location>
        <begin position="1"/>
        <end position="20"/>
    </location>
</feature>
<feature type="region of interest" description="Disordered" evidence="2">
    <location>
        <begin position="31"/>
        <end position="78"/>
    </location>
</feature>
<feature type="region of interest" description="Disordered" evidence="2">
    <location>
        <begin position="166"/>
        <end position="188"/>
    </location>
</feature>
<feature type="compositionally biased region" description="Low complexity" evidence="2">
    <location>
        <begin position="7"/>
        <end position="16"/>
    </location>
</feature>
<organism>
    <name type="scientific">Rhodococcus jostii (strain RHA1)</name>
    <dbReference type="NCBI Taxonomy" id="101510"/>
    <lineage>
        <taxon>Bacteria</taxon>
        <taxon>Bacillati</taxon>
        <taxon>Actinomycetota</taxon>
        <taxon>Actinomycetes</taxon>
        <taxon>Mycobacteriales</taxon>
        <taxon>Nocardiaceae</taxon>
        <taxon>Rhodococcus</taxon>
    </lineage>
</organism>
<comment type="similarity">
    <text evidence="1">Belongs to the UPF0232 family.</text>
</comment>
<name>Y3670_RHOJR</name>
<gene>
    <name type="ordered locus">RHA1_ro03670</name>
</gene>
<accession>Q0SAG3</accession>